<organism>
    <name type="scientific">Alkaliphilus oremlandii (strain OhILAs)</name>
    <name type="common">Clostridium oremlandii (strain OhILAs)</name>
    <dbReference type="NCBI Taxonomy" id="350688"/>
    <lineage>
        <taxon>Bacteria</taxon>
        <taxon>Bacillati</taxon>
        <taxon>Bacillota</taxon>
        <taxon>Clostridia</taxon>
        <taxon>Peptostreptococcales</taxon>
        <taxon>Natronincolaceae</taxon>
        <taxon>Alkaliphilus</taxon>
    </lineage>
</organism>
<proteinExistence type="inferred from homology"/>
<name>SYS_ALKOO</name>
<reference key="1">
    <citation type="submission" date="2007-10" db="EMBL/GenBank/DDBJ databases">
        <title>Complete genome of Alkaliphilus oremlandii OhILAs.</title>
        <authorList>
            <person name="Copeland A."/>
            <person name="Lucas S."/>
            <person name="Lapidus A."/>
            <person name="Barry K."/>
            <person name="Detter J.C."/>
            <person name="Glavina del Rio T."/>
            <person name="Hammon N."/>
            <person name="Israni S."/>
            <person name="Dalin E."/>
            <person name="Tice H."/>
            <person name="Pitluck S."/>
            <person name="Chain P."/>
            <person name="Malfatti S."/>
            <person name="Shin M."/>
            <person name="Vergez L."/>
            <person name="Schmutz J."/>
            <person name="Larimer F."/>
            <person name="Land M."/>
            <person name="Hauser L."/>
            <person name="Kyrpides N."/>
            <person name="Mikhailova N."/>
            <person name="Stolz J.F."/>
            <person name="Dawson A."/>
            <person name="Fisher E."/>
            <person name="Crable B."/>
            <person name="Perera E."/>
            <person name="Lisak J."/>
            <person name="Ranganathan M."/>
            <person name="Basu P."/>
            <person name="Richardson P."/>
        </authorList>
    </citation>
    <scope>NUCLEOTIDE SEQUENCE [LARGE SCALE GENOMIC DNA]</scope>
    <source>
        <strain>OhILAs</strain>
    </source>
</reference>
<sequence>MLDIKRIRNNLDEIKAAMARRGEKDFDLDAVVALDEKRRELLQQVELMKNEQNTVSKEVPKLKKEGKDATEVMARMKELSGKIKELDGQVKEVEDQLEYTLLRIPNVPHPDVPQGETDDDNIEVRKWSEPTHFDFEPKAHWDIATDLGIIDFEAASKITGARFALYKGVGARLERALINFMLDLHIEEHGYTEVLPPFMVNRSSMTGTGQLPKFEEDAFKLPQKDYFLVPTAEVPVTNMHRDEIIEGANLPLSYVAYTPCFRSEAGSAGRDTRGLIRQHQFNKVELVKFVKPEDSYAELEKLTNNAEKVLQLLEIPYRIVRICTGDLGFTAAFKYDIEVWMPSYNRYVEISSCSNFEDFQARRANIRYRPEEKGKVEFLHTLNGSGLAVGRTVAAILENCQDDEGNVKIPEALIPYMRGIKVITK</sequence>
<keyword id="KW-0030">Aminoacyl-tRNA synthetase</keyword>
<keyword id="KW-0067">ATP-binding</keyword>
<keyword id="KW-0963">Cytoplasm</keyword>
<keyword id="KW-0436">Ligase</keyword>
<keyword id="KW-0547">Nucleotide-binding</keyword>
<keyword id="KW-0648">Protein biosynthesis</keyword>
<keyword id="KW-1185">Reference proteome</keyword>
<comment type="function">
    <text evidence="1">Catalyzes the attachment of serine to tRNA(Ser). Is also able to aminoacylate tRNA(Sec) with serine, to form the misacylated tRNA L-seryl-tRNA(Sec), which will be further converted into selenocysteinyl-tRNA(Sec).</text>
</comment>
<comment type="catalytic activity">
    <reaction evidence="1">
        <text>tRNA(Ser) + L-serine + ATP = L-seryl-tRNA(Ser) + AMP + diphosphate + H(+)</text>
        <dbReference type="Rhea" id="RHEA:12292"/>
        <dbReference type="Rhea" id="RHEA-COMP:9669"/>
        <dbReference type="Rhea" id="RHEA-COMP:9703"/>
        <dbReference type="ChEBI" id="CHEBI:15378"/>
        <dbReference type="ChEBI" id="CHEBI:30616"/>
        <dbReference type="ChEBI" id="CHEBI:33019"/>
        <dbReference type="ChEBI" id="CHEBI:33384"/>
        <dbReference type="ChEBI" id="CHEBI:78442"/>
        <dbReference type="ChEBI" id="CHEBI:78533"/>
        <dbReference type="ChEBI" id="CHEBI:456215"/>
        <dbReference type="EC" id="6.1.1.11"/>
    </reaction>
</comment>
<comment type="catalytic activity">
    <reaction evidence="1">
        <text>tRNA(Sec) + L-serine + ATP = L-seryl-tRNA(Sec) + AMP + diphosphate + H(+)</text>
        <dbReference type="Rhea" id="RHEA:42580"/>
        <dbReference type="Rhea" id="RHEA-COMP:9742"/>
        <dbReference type="Rhea" id="RHEA-COMP:10128"/>
        <dbReference type="ChEBI" id="CHEBI:15378"/>
        <dbReference type="ChEBI" id="CHEBI:30616"/>
        <dbReference type="ChEBI" id="CHEBI:33019"/>
        <dbReference type="ChEBI" id="CHEBI:33384"/>
        <dbReference type="ChEBI" id="CHEBI:78442"/>
        <dbReference type="ChEBI" id="CHEBI:78533"/>
        <dbReference type="ChEBI" id="CHEBI:456215"/>
        <dbReference type="EC" id="6.1.1.11"/>
    </reaction>
</comment>
<comment type="pathway">
    <text evidence="1">Aminoacyl-tRNA biosynthesis; selenocysteinyl-tRNA(Sec) biosynthesis; L-seryl-tRNA(Sec) from L-serine and tRNA(Sec): step 1/1.</text>
</comment>
<comment type="subunit">
    <text evidence="1">Homodimer. The tRNA molecule binds across the dimer.</text>
</comment>
<comment type="subcellular location">
    <subcellularLocation>
        <location evidence="1">Cytoplasm</location>
    </subcellularLocation>
</comment>
<comment type="domain">
    <text evidence="1">Consists of two distinct domains, a catalytic core and a N-terminal extension that is involved in tRNA binding.</text>
</comment>
<comment type="similarity">
    <text evidence="1">Belongs to the class-II aminoacyl-tRNA synthetase family. Type-1 seryl-tRNA synthetase subfamily.</text>
</comment>
<dbReference type="EC" id="6.1.1.11" evidence="1"/>
<dbReference type="EMBL" id="CP000853">
    <property type="protein sequence ID" value="ABW17584.1"/>
    <property type="molecule type" value="Genomic_DNA"/>
</dbReference>
<dbReference type="RefSeq" id="WP_012157899.1">
    <property type="nucleotide sequence ID" value="NC_009922.1"/>
</dbReference>
<dbReference type="SMR" id="A8MEB3"/>
<dbReference type="STRING" id="350688.Clos_0014"/>
<dbReference type="KEGG" id="aoe:Clos_0014"/>
<dbReference type="eggNOG" id="COG0172">
    <property type="taxonomic scope" value="Bacteria"/>
</dbReference>
<dbReference type="HOGENOM" id="CLU_023797_1_1_9"/>
<dbReference type="OrthoDB" id="9804647at2"/>
<dbReference type="UniPathway" id="UPA00906">
    <property type="reaction ID" value="UER00895"/>
</dbReference>
<dbReference type="Proteomes" id="UP000000269">
    <property type="component" value="Chromosome"/>
</dbReference>
<dbReference type="GO" id="GO:0005737">
    <property type="term" value="C:cytoplasm"/>
    <property type="evidence" value="ECO:0007669"/>
    <property type="project" value="UniProtKB-SubCell"/>
</dbReference>
<dbReference type="GO" id="GO:0005524">
    <property type="term" value="F:ATP binding"/>
    <property type="evidence" value="ECO:0007669"/>
    <property type="project" value="UniProtKB-UniRule"/>
</dbReference>
<dbReference type="GO" id="GO:0140096">
    <property type="term" value="F:catalytic activity, acting on a protein"/>
    <property type="evidence" value="ECO:0007669"/>
    <property type="project" value="UniProtKB-ARBA"/>
</dbReference>
<dbReference type="GO" id="GO:0004828">
    <property type="term" value="F:serine-tRNA ligase activity"/>
    <property type="evidence" value="ECO:0007669"/>
    <property type="project" value="UniProtKB-UniRule"/>
</dbReference>
<dbReference type="GO" id="GO:0016740">
    <property type="term" value="F:transferase activity"/>
    <property type="evidence" value="ECO:0007669"/>
    <property type="project" value="UniProtKB-ARBA"/>
</dbReference>
<dbReference type="GO" id="GO:0016260">
    <property type="term" value="P:selenocysteine biosynthetic process"/>
    <property type="evidence" value="ECO:0007669"/>
    <property type="project" value="UniProtKB-UniRule"/>
</dbReference>
<dbReference type="GO" id="GO:0006434">
    <property type="term" value="P:seryl-tRNA aminoacylation"/>
    <property type="evidence" value="ECO:0007669"/>
    <property type="project" value="UniProtKB-UniRule"/>
</dbReference>
<dbReference type="CDD" id="cd00770">
    <property type="entry name" value="SerRS_core"/>
    <property type="match status" value="1"/>
</dbReference>
<dbReference type="Gene3D" id="3.30.930.10">
    <property type="entry name" value="Bira Bifunctional Protein, Domain 2"/>
    <property type="match status" value="1"/>
</dbReference>
<dbReference type="Gene3D" id="1.10.287.40">
    <property type="entry name" value="Serine-tRNA synthetase, tRNA binding domain"/>
    <property type="match status" value="1"/>
</dbReference>
<dbReference type="HAMAP" id="MF_00176">
    <property type="entry name" value="Ser_tRNA_synth_type1"/>
    <property type="match status" value="1"/>
</dbReference>
<dbReference type="InterPro" id="IPR002314">
    <property type="entry name" value="aa-tRNA-synt_IIb"/>
</dbReference>
<dbReference type="InterPro" id="IPR006195">
    <property type="entry name" value="aa-tRNA-synth_II"/>
</dbReference>
<dbReference type="InterPro" id="IPR045864">
    <property type="entry name" value="aa-tRNA-synth_II/BPL/LPL"/>
</dbReference>
<dbReference type="InterPro" id="IPR002317">
    <property type="entry name" value="Ser-tRNA-ligase_type_1"/>
</dbReference>
<dbReference type="InterPro" id="IPR015866">
    <property type="entry name" value="Ser-tRNA-synth_1_N"/>
</dbReference>
<dbReference type="InterPro" id="IPR042103">
    <property type="entry name" value="SerRS_1_N_sf"/>
</dbReference>
<dbReference type="InterPro" id="IPR033729">
    <property type="entry name" value="SerRS_core"/>
</dbReference>
<dbReference type="InterPro" id="IPR010978">
    <property type="entry name" value="tRNA-bd_arm"/>
</dbReference>
<dbReference type="NCBIfam" id="TIGR00414">
    <property type="entry name" value="serS"/>
    <property type="match status" value="1"/>
</dbReference>
<dbReference type="PANTHER" id="PTHR43697:SF1">
    <property type="entry name" value="SERINE--TRNA LIGASE"/>
    <property type="match status" value="1"/>
</dbReference>
<dbReference type="PANTHER" id="PTHR43697">
    <property type="entry name" value="SERYL-TRNA SYNTHETASE"/>
    <property type="match status" value="1"/>
</dbReference>
<dbReference type="Pfam" id="PF02403">
    <property type="entry name" value="Seryl_tRNA_N"/>
    <property type="match status" value="1"/>
</dbReference>
<dbReference type="Pfam" id="PF00587">
    <property type="entry name" value="tRNA-synt_2b"/>
    <property type="match status" value="1"/>
</dbReference>
<dbReference type="PIRSF" id="PIRSF001529">
    <property type="entry name" value="Ser-tRNA-synth_IIa"/>
    <property type="match status" value="1"/>
</dbReference>
<dbReference type="PRINTS" id="PR00981">
    <property type="entry name" value="TRNASYNTHSER"/>
</dbReference>
<dbReference type="SUPFAM" id="SSF55681">
    <property type="entry name" value="Class II aaRS and biotin synthetases"/>
    <property type="match status" value="1"/>
</dbReference>
<dbReference type="SUPFAM" id="SSF46589">
    <property type="entry name" value="tRNA-binding arm"/>
    <property type="match status" value="1"/>
</dbReference>
<dbReference type="PROSITE" id="PS50862">
    <property type="entry name" value="AA_TRNA_LIGASE_II"/>
    <property type="match status" value="1"/>
</dbReference>
<gene>
    <name evidence="1" type="primary">serS</name>
    <name type="ordered locus">Clos_0014</name>
</gene>
<feature type="chain" id="PRO_1000058348" description="Serine--tRNA ligase">
    <location>
        <begin position="1"/>
        <end position="425"/>
    </location>
</feature>
<feature type="binding site" evidence="1">
    <location>
        <begin position="231"/>
        <end position="233"/>
    </location>
    <ligand>
        <name>L-serine</name>
        <dbReference type="ChEBI" id="CHEBI:33384"/>
    </ligand>
</feature>
<feature type="binding site" evidence="1">
    <location>
        <begin position="262"/>
        <end position="264"/>
    </location>
    <ligand>
        <name>ATP</name>
        <dbReference type="ChEBI" id="CHEBI:30616"/>
    </ligand>
</feature>
<feature type="binding site" evidence="1">
    <location>
        <position position="285"/>
    </location>
    <ligand>
        <name>L-serine</name>
        <dbReference type="ChEBI" id="CHEBI:33384"/>
    </ligand>
</feature>
<feature type="binding site" evidence="1">
    <location>
        <begin position="349"/>
        <end position="352"/>
    </location>
    <ligand>
        <name>ATP</name>
        <dbReference type="ChEBI" id="CHEBI:30616"/>
    </ligand>
</feature>
<feature type="binding site" evidence="1">
    <location>
        <position position="385"/>
    </location>
    <ligand>
        <name>L-serine</name>
        <dbReference type="ChEBI" id="CHEBI:33384"/>
    </ligand>
</feature>
<accession>A8MEB3</accession>
<protein>
    <recommendedName>
        <fullName evidence="1">Serine--tRNA ligase</fullName>
        <ecNumber evidence="1">6.1.1.11</ecNumber>
    </recommendedName>
    <alternativeName>
        <fullName evidence="1">Seryl-tRNA synthetase</fullName>
        <shortName evidence="1">SerRS</shortName>
    </alternativeName>
    <alternativeName>
        <fullName evidence="1">Seryl-tRNA(Ser/Sec) synthetase</fullName>
    </alternativeName>
</protein>
<evidence type="ECO:0000255" key="1">
    <source>
        <dbReference type="HAMAP-Rule" id="MF_00176"/>
    </source>
</evidence>